<proteinExistence type="inferred from homology"/>
<keyword id="KW-0012">Acyltransferase</keyword>
<keyword id="KW-0963">Cytoplasm</keyword>
<keyword id="KW-1185">Reference proteome</keyword>
<keyword id="KW-0808">Transferase</keyword>
<evidence type="ECO:0000255" key="1">
    <source>
        <dbReference type="HAMAP-Rule" id="MF_00013"/>
    </source>
</evidence>
<evidence type="ECO:0000255" key="2">
    <source>
        <dbReference type="PROSITE-ProRule" id="PRU01067"/>
    </source>
</evidence>
<name>LIPB_PROM0</name>
<sequence length="216" mass="25017">MDNRTAIIKQPDNISSFHDVYKLQKEYQEALILDNSNPDFIWIGEHQLCYTLGRGSNYDNLLFSLNDAKYDVFKIDRGGEVTCHMPGQLVTYLVLDLKNFNKDLNWYLRKIEEIIIKILGAFNIDCHSRKGFTGVWIGNKKIASIGIGCKKWITINGFSINIDCELENFNKIVPCGIENCLMANMIDYNKNLNIQEVKRIVKKTIEEEFNFDFISK</sequence>
<accession>A3PBB9</accession>
<protein>
    <recommendedName>
        <fullName evidence="1">Octanoyltransferase</fullName>
        <ecNumber evidence="1">2.3.1.181</ecNumber>
    </recommendedName>
    <alternativeName>
        <fullName evidence="1">Lipoate-protein ligase B</fullName>
    </alternativeName>
    <alternativeName>
        <fullName evidence="1">Lipoyl/octanoyl transferase</fullName>
    </alternativeName>
    <alternativeName>
        <fullName evidence="1">Octanoyl-[acyl-carrier-protein]-protein N-octanoyltransferase</fullName>
    </alternativeName>
</protein>
<dbReference type="EC" id="2.3.1.181" evidence="1"/>
<dbReference type="EMBL" id="CP000576">
    <property type="protein sequence ID" value="ABO17044.1"/>
    <property type="molecule type" value="Genomic_DNA"/>
</dbReference>
<dbReference type="RefSeq" id="WP_011862426.1">
    <property type="nucleotide sequence ID" value="NC_009091.1"/>
</dbReference>
<dbReference type="SMR" id="A3PBB9"/>
<dbReference type="STRING" id="167546.P9301_04211"/>
<dbReference type="KEGG" id="pmg:P9301_04211"/>
<dbReference type="eggNOG" id="COG0321">
    <property type="taxonomic scope" value="Bacteria"/>
</dbReference>
<dbReference type="HOGENOM" id="CLU_035168_1_3_3"/>
<dbReference type="OrthoDB" id="9787061at2"/>
<dbReference type="UniPathway" id="UPA00538">
    <property type="reaction ID" value="UER00592"/>
</dbReference>
<dbReference type="Proteomes" id="UP000001430">
    <property type="component" value="Chromosome"/>
</dbReference>
<dbReference type="GO" id="GO:0005737">
    <property type="term" value="C:cytoplasm"/>
    <property type="evidence" value="ECO:0007669"/>
    <property type="project" value="UniProtKB-SubCell"/>
</dbReference>
<dbReference type="GO" id="GO:0033819">
    <property type="term" value="F:lipoyl(octanoyl) transferase activity"/>
    <property type="evidence" value="ECO:0007669"/>
    <property type="project" value="UniProtKB-EC"/>
</dbReference>
<dbReference type="GO" id="GO:0036211">
    <property type="term" value="P:protein modification process"/>
    <property type="evidence" value="ECO:0007669"/>
    <property type="project" value="InterPro"/>
</dbReference>
<dbReference type="CDD" id="cd16444">
    <property type="entry name" value="LipB"/>
    <property type="match status" value="1"/>
</dbReference>
<dbReference type="Gene3D" id="3.30.930.10">
    <property type="entry name" value="Bira Bifunctional Protein, Domain 2"/>
    <property type="match status" value="1"/>
</dbReference>
<dbReference type="HAMAP" id="MF_00013">
    <property type="entry name" value="LipB"/>
    <property type="match status" value="1"/>
</dbReference>
<dbReference type="InterPro" id="IPR045864">
    <property type="entry name" value="aa-tRNA-synth_II/BPL/LPL"/>
</dbReference>
<dbReference type="InterPro" id="IPR004143">
    <property type="entry name" value="BPL_LPL_catalytic"/>
</dbReference>
<dbReference type="InterPro" id="IPR000544">
    <property type="entry name" value="Octanoyltransferase"/>
</dbReference>
<dbReference type="InterPro" id="IPR020605">
    <property type="entry name" value="Octanoyltransferase_CS"/>
</dbReference>
<dbReference type="NCBIfam" id="TIGR00214">
    <property type="entry name" value="lipB"/>
    <property type="match status" value="1"/>
</dbReference>
<dbReference type="PANTHER" id="PTHR10993:SF7">
    <property type="entry name" value="LIPOYLTRANSFERASE 2, MITOCHONDRIAL-RELATED"/>
    <property type="match status" value="1"/>
</dbReference>
<dbReference type="PANTHER" id="PTHR10993">
    <property type="entry name" value="OCTANOYLTRANSFERASE"/>
    <property type="match status" value="1"/>
</dbReference>
<dbReference type="Pfam" id="PF21948">
    <property type="entry name" value="LplA-B_cat"/>
    <property type="match status" value="1"/>
</dbReference>
<dbReference type="PIRSF" id="PIRSF016262">
    <property type="entry name" value="LPLase"/>
    <property type="match status" value="1"/>
</dbReference>
<dbReference type="SUPFAM" id="SSF55681">
    <property type="entry name" value="Class II aaRS and biotin synthetases"/>
    <property type="match status" value="1"/>
</dbReference>
<dbReference type="PROSITE" id="PS51733">
    <property type="entry name" value="BPL_LPL_CATALYTIC"/>
    <property type="match status" value="1"/>
</dbReference>
<dbReference type="PROSITE" id="PS01313">
    <property type="entry name" value="LIPB"/>
    <property type="match status" value="1"/>
</dbReference>
<gene>
    <name evidence="1" type="primary">lipB</name>
    <name type="ordered locus">P9301_04211</name>
</gene>
<feature type="chain" id="PRO_1000057106" description="Octanoyltransferase">
    <location>
        <begin position="1"/>
        <end position="216"/>
    </location>
</feature>
<feature type="domain" description="BPL/LPL catalytic" evidence="2">
    <location>
        <begin position="35"/>
        <end position="213"/>
    </location>
</feature>
<feature type="active site" description="Acyl-thioester intermediate" evidence="1">
    <location>
        <position position="175"/>
    </location>
</feature>
<feature type="binding site" evidence="1">
    <location>
        <begin position="77"/>
        <end position="84"/>
    </location>
    <ligand>
        <name>substrate</name>
    </ligand>
</feature>
<feature type="binding site" evidence="1">
    <location>
        <begin position="144"/>
        <end position="146"/>
    </location>
    <ligand>
        <name>substrate</name>
    </ligand>
</feature>
<feature type="binding site" evidence="1">
    <location>
        <begin position="157"/>
        <end position="159"/>
    </location>
    <ligand>
        <name>substrate</name>
    </ligand>
</feature>
<feature type="site" description="Lowers pKa of active site Cys" evidence="1">
    <location>
        <position position="141"/>
    </location>
</feature>
<comment type="function">
    <text evidence="1">Catalyzes the transfer of endogenously produced octanoic acid from octanoyl-acyl-carrier-protein onto the lipoyl domains of lipoate-dependent enzymes. Lipoyl-ACP can also act as a substrate although octanoyl-ACP is likely to be the physiological substrate.</text>
</comment>
<comment type="catalytic activity">
    <reaction evidence="1">
        <text>octanoyl-[ACP] + L-lysyl-[protein] = N(6)-octanoyl-L-lysyl-[protein] + holo-[ACP] + H(+)</text>
        <dbReference type="Rhea" id="RHEA:17665"/>
        <dbReference type="Rhea" id="RHEA-COMP:9636"/>
        <dbReference type="Rhea" id="RHEA-COMP:9685"/>
        <dbReference type="Rhea" id="RHEA-COMP:9752"/>
        <dbReference type="Rhea" id="RHEA-COMP:9928"/>
        <dbReference type="ChEBI" id="CHEBI:15378"/>
        <dbReference type="ChEBI" id="CHEBI:29969"/>
        <dbReference type="ChEBI" id="CHEBI:64479"/>
        <dbReference type="ChEBI" id="CHEBI:78463"/>
        <dbReference type="ChEBI" id="CHEBI:78809"/>
        <dbReference type="EC" id="2.3.1.181"/>
    </reaction>
</comment>
<comment type="pathway">
    <text evidence="1">Protein modification; protein lipoylation via endogenous pathway; protein N(6)-(lipoyl)lysine from octanoyl-[acyl-carrier-protein]: step 1/2.</text>
</comment>
<comment type="subcellular location">
    <subcellularLocation>
        <location evidence="1">Cytoplasm</location>
    </subcellularLocation>
</comment>
<comment type="miscellaneous">
    <text evidence="1">In the reaction, the free carboxyl group of octanoic acid is attached via an amide linkage to the epsilon-amino group of a specific lysine residue of lipoyl domains of lipoate-dependent enzymes.</text>
</comment>
<comment type="similarity">
    <text evidence="1">Belongs to the LipB family.</text>
</comment>
<reference key="1">
    <citation type="journal article" date="2007" name="PLoS Genet.">
        <title>Patterns and implications of gene gain and loss in the evolution of Prochlorococcus.</title>
        <authorList>
            <person name="Kettler G.C."/>
            <person name="Martiny A.C."/>
            <person name="Huang K."/>
            <person name="Zucker J."/>
            <person name="Coleman M.L."/>
            <person name="Rodrigue S."/>
            <person name="Chen F."/>
            <person name="Lapidus A."/>
            <person name="Ferriera S."/>
            <person name="Johnson J."/>
            <person name="Steglich C."/>
            <person name="Church G.M."/>
            <person name="Richardson P."/>
            <person name="Chisholm S.W."/>
        </authorList>
    </citation>
    <scope>NUCLEOTIDE SEQUENCE [LARGE SCALE GENOMIC DNA]</scope>
    <source>
        <strain>MIT 9301</strain>
    </source>
</reference>
<organism>
    <name type="scientific">Prochlorococcus marinus (strain MIT 9301)</name>
    <dbReference type="NCBI Taxonomy" id="167546"/>
    <lineage>
        <taxon>Bacteria</taxon>
        <taxon>Bacillati</taxon>
        <taxon>Cyanobacteriota</taxon>
        <taxon>Cyanophyceae</taxon>
        <taxon>Synechococcales</taxon>
        <taxon>Prochlorococcaceae</taxon>
        <taxon>Prochlorococcus</taxon>
    </lineage>
</organism>